<accession>O83650</accession>
<proteinExistence type="inferred from homology"/>
<name>SYK_TREPA</name>
<feature type="chain" id="PRO_0000152745" description="Lysine--tRNA ligase">
    <location>
        <begin position="1"/>
        <end position="528"/>
    </location>
</feature>
<feature type="short sequence motif" description="'HIGH' region">
    <location>
        <begin position="36"/>
        <end position="44"/>
    </location>
</feature>
<feature type="short sequence motif" description="'KMSKS' region">
    <location>
        <begin position="287"/>
        <end position="291"/>
    </location>
</feature>
<keyword id="KW-0030">Aminoacyl-tRNA synthetase</keyword>
<keyword id="KW-0067">ATP-binding</keyword>
<keyword id="KW-0963">Cytoplasm</keyword>
<keyword id="KW-0436">Ligase</keyword>
<keyword id="KW-0547">Nucleotide-binding</keyword>
<keyword id="KW-0648">Protein biosynthesis</keyword>
<keyword id="KW-1185">Reference proteome</keyword>
<comment type="catalytic activity">
    <reaction>
        <text>tRNA(Lys) + L-lysine + ATP = L-lysyl-tRNA(Lys) + AMP + diphosphate</text>
        <dbReference type="Rhea" id="RHEA:20792"/>
        <dbReference type="Rhea" id="RHEA-COMP:9696"/>
        <dbReference type="Rhea" id="RHEA-COMP:9697"/>
        <dbReference type="ChEBI" id="CHEBI:30616"/>
        <dbReference type="ChEBI" id="CHEBI:32551"/>
        <dbReference type="ChEBI" id="CHEBI:33019"/>
        <dbReference type="ChEBI" id="CHEBI:78442"/>
        <dbReference type="ChEBI" id="CHEBI:78529"/>
        <dbReference type="ChEBI" id="CHEBI:456215"/>
        <dbReference type="EC" id="6.1.1.6"/>
    </reaction>
</comment>
<comment type="subcellular location">
    <subcellularLocation>
        <location evidence="1">Cytoplasm</location>
    </subcellularLocation>
</comment>
<comment type="similarity">
    <text evidence="2">Belongs to the class-I aminoacyl-tRNA synthetase family.</text>
</comment>
<organism>
    <name type="scientific">Treponema pallidum (strain Nichols)</name>
    <dbReference type="NCBI Taxonomy" id="243276"/>
    <lineage>
        <taxon>Bacteria</taxon>
        <taxon>Pseudomonadati</taxon>
        <taxon>Spirochaetota</taxon>
        <taxon>Spirochaetia</taxon>
        <taxon>Spirochaetales</taxon>
        <taxon>Treponemataceae</taxon>
        <taxon>Treponema</taxon>
    </lineage>
</organism>
<protein>
    <recommendedName>
        <fullName>Lysine--tRNA ligase</fullName>
        <ecNumber>6.1.1.6</ecNumber>
    </recommendedName>
    <alternativeName>
        <fullName>Lysyl-tRNA synthetase</fullName>
        <shortName>LysRS</shortName>
    </alternativeName>
</protein>
<gene>
    <name type="primary">lysS</name>
    <name type="ordered locus">TP_0644</name>
</gene>
<sequence>MSICEKSLHWADKVAHKIIKERADCDQYTCASGITPSGTVHIGNFREIISVDLVVRALRDQGKSVRFVHSWDDYDVFRRIPDNVPAQDELKQYIRMPITSVPDPFQQEDSYARHHEREIESALPEVGIYPEYVYQSKQYQAGVYAQEIKIALDNRHRIQAILNEYRDEQHKISGTYWPVSVFCTACHKDCTTVDAWDSHWCLQYHCECGHGEQVDLRQTSAVKLSWRVDWAMRWSKEHVVFEPAGKDHHSQGGSFDTARLISDHIYHWPAPVSFRYDFIGLKGLPGKMSSSAGKVVGLRDVLEVYQPEVLRYLFVSTRPNTEFSISFDLDVLKIYEDYDKSERVAWGIHAAKSEHEFMRHKRIYELSQVRGMPPCISYQVPFRHVCNILQINSGDISAVLAFFSDIHKDQIERFVRRCQCAWNWIRDAGAPDDFKFTLKEDGVRVPLSAEITEALRLIRDTLVPRTDVLSEKELSAELYAVARQIPVGSKELFTALYQVLIGKNQGPRLAGFMKVIGTQRLHRMLSVY</sequence>
<reference key="1">
    <citation type="journal article" date="1998" name="Science">
        <title>Complete genome sequence of Treponema pallidum, the syphilis spirochete.</title>
        <authorList>
            <person name="Fraser C.M."/>
            <person name="Norris S.J."/>
            <person name="Weinstock G.M."/>
            <person name="White O."/>
            <person name="Sutton G.G."/>
            <person name="Dodson R.J."/>
            <person name="Gwinn M.L."/>
            <person name="Hickey E.K."/>
            <person name="Clayton R.A."/>
            <person name="Ketchum K.A."/>
            <person name="Sodergren E."/>
            <person name="Hardham J.M."/>
            <person name="McLeod M.P."/>
            <person name="Salzberg S.L."/>
            <person name="Peterson J.D."/>
            <person name="Khalak H.G."/>
            <person name="Richardson D.L."/>
            <person name="Howell J.K."/>
            <person name="Chidambaram M."/>
            <person name="Utterback T.R."/>
            <person name="McDonald L.A."/>
            <person name="Artiach P."/>
            <person name="Bowman C."/>
            <person name="Cotton M.D."/>
            <person name="Fujii C."/>
            <person name="Garland S.A."/>
            <person name="Hatch B."/>
            <person name="Horst K."/>
            <person name="Roberts K.M."/>
            <person name="Sandusky M."/>
            <person name="Weidman J.F."/>
            <person name="Smith H.O."/>
            <person name="Venter J.C."/>
        </authorList>
    </citation>
    <scope>NUCLEOTIDE SEQUENCE [LARGE SCALE GENOMIC DNA]</scope>
    <source>
        <strain>Nichols</strain>
    </source>
</reference>
<evidence type="ECO:0000250" key="1"/>
<evidence type="ECO:0000305" key="2"/>
<dbReference type="EC" id="6.1.1.6"/>
<dbReference type="EMBL" id="AE000520">
    <property type="protein sequence ID" value="AAC65618.1"/>
    <property type="molecule type" value="Genomic_DNA"/>
</dbReference>
<dbReference type="PIR" id="C71299">
    <property type="entry name" value="C71299"/>
</dbReference>
<dbReference type="RefSeq" id="WP_010882089.1">
    <property type="nucleotide sequence ID" value="NC_021490.2"/>
</dbReference>
<dbReference type="SMR" id="O83650"/>
<dbReference type="IntAct" id="O83650">
    <property type="interactions" value="3"/>
</dbReference>
<dbReference type="STRING" id="243276.TP_0644"/>
<dbReference type="EnsemblBacteria" id="AAC65618">
    <property type="protein sequence ID" value="AAC65618"/>
    <property type="gene ID" value="TP_0644"/>
</dbReference>
<dbReference type="GeneID" id="93876413"/>
<dbReference type="KEGG" id="tpa:TP_0644"/>
<dbReference type="KEGG" id="tpw:TPANIC_0644"/>
<dbReference type="eggNOG" id="COG1384">
    <property type="taxonomic scope" value="Bacteria"/>
</dbReference>
<dbReference type="HOGENOM" id="CLU_025562_1_0_12"/>
<dbReference type="OrthoDB" id="9803151at2"/>
<dbReference type="BRENDA" id="6.1.1.6">
    <property type="organism ID" value="6429"/>
</dbReference>
<dbReference type="Proteomes" id="UP000000811">
    <property type="component" value="Chromosome"/>
</dbReference>
<dbReference type="GO" id="GO:0005737">
    <property type="term" value="C:cytoplasm"/>
    <property type="evidence" value="ECO:0007669"/>
    <property type="project" value="UniProtKB-SubCell"/>
</dbReference>
<dbReference type="GO" id="GO:0005524">
    <property type="term" value="F:ATP binding"/>
    <property type="evidence" value="ECO:0007669"/>
    <property type="project" value="UniProtKB-UniRule"/>
</dbReference>
<dbReference type="GO" id="GO:0004824">
    <property type="term" value="F:lysine-tRNA ligase activity"/>
    <property type="evidence" value="ECO:0007669"/>
    <property type="project" value="UniProtKB-UniRule"/>
</dbReference>
<dbReference type="GO" id="GO:0000049">
    <property type="term" value="F:tRNA binding"/>
    <property type="evidence" value="ECO:0007669"/>
    <property type="project" value="InterPro"/>
</dbReference>
<dbReference type="GO" id="GO:0006430">
    <property type="term" value="P:lysyl-tRNA aminoacylation"/>
    <property type="evidence" value="ECO:0007669"/>
    <property type="project" value="UniProtKB-UniRule"/>
</dbReference>
<dbReference type="CDD" id="cd00674">
    <property type="entry name" value="LysRS_core_class_I"/>
    <property type="match status" value="1"/>
</dbReference>
<dbReference type="Gene3D" id="1.10.10.350">
    <property type="match status" value="1"/>
</dbReference>
<dbReference type="Gene3D" id="1.10.10.770">
    <property type="match status" value="1"/>
</dbReference>
<dbReference type="Gene3D" id="3.40.50.620">
    <property type="entry name" value="HUPs"/>
    <property type="match status" value="2"/>
</dbReference>
<dbReference type="Gene3D" id="6.10.20.10">
    <property type="entry name" value="Lysine tRNA ligase, stem contact fold domain"/>
    <property type="match status" value="1"/>
</dbReference>
<dbReference type="HAMAP" id="MF_00177">
    <property type="entry name" value="Lys_tRNA_synth_class1"/>
    <property type="match status" value="1"/>
</dbReference>
<dbReference type="InterPro" id="IPR020751">
    <property type="entry name" value="aa-tRNA-synth_I_codon-bd_sub2"/>
</dbReference>
<dbReference type="InterPro" id="IPR001412">
    <property type="entry name" value="aa-tRNA-synth_I_CS"/>
</dbReference>
<dbReference type="InterPro" id="IPR008925">
    <property type="entry name" value="aa_tRNA-synth_I_cd-bd_sf"/>
</dbReference>
<dbReference type="InterPro" id="IPR002904">
    <property type="entry name" value="Lys-tRNA-ligase"/>
</dbReference>
<dbReference type="InterPro" id="IPR042078">
    <property type="entry name" value="Lys-tRNA-ligase_SC_fold"/>
</dbReference>
<dbReference type="InterPro" id="IPR014729">
    <property type="entry name" value="Rossmann-like_a/b/a_fold"/>
</dbReference>
<dbReference type="NCBIfam" id="TIGR00467">
    <property type="entry name" value="lysS_arch"/>
    <property type="match status" value="1"/>
</dbReference>
<dbReference type="PANTHER" id="PTHR37940">
    <property type="entry name" value="LYSINE--TRNA LIGASE"/>
    <property type="match status" value="1"/>
</dbReference>
<dbReference type="PANTHER" id="PTHR37940:SF1">
    <property type="entry name" value="LYSINE--TRNA LIGASE"/>
    <property type="match status" value="1"/>
</dbReference>
<dbReference type="Pfam" id="PF01921">
    <property type="entry name" value="tRNA-synt_1f"/>
    <property type="match status" value="1"/>
</dbReference>
<dbReference type="SUPFAM" id="SSF48163">
    <property type="entry name" value="An anticodon-binding domain of class I aminoacyl-tRNA synthetases"/>
    <property type="match status" value="1"/>
</dbReference>
<dbReference type="SUPFAM" id="SSF52374">
    <property type="entry name" value="Nucleotidylyl transferase"/>
    <property type="match status" value="1"/>
</dbReference>
<dbReference type="PROSITE" id="PS00178">
    <property type="entry name" value="AA_TRNA_LIGASE_I"/>
    <property type="match status" value="1"/>
</dbReference>